<organism>
    <name type="scientific">Streptococcus pyogenes serotype M6 (strain ATCC BAA-946 / MGAS10394)</name>
    <dbReference type="NCBI Taxonomy" id="286636"/>
    <lineage>
        <taxon>Bacteria</taxon>
        <taxon>Bacillati</taxon>
        <taxon>Bacillota</taxon>
        <taxon>Bacilli</taxon>
        <taxon>Lactobacillales</taxon>
        <taxon>Streptococcaceae</taxon>
        <taxon>Streptococcus</taxon>
    </lineage>
</organism>
<gene>
    <name evidence="1" type="primary">rpsF</name>
    <name type="ordered locus">M6_Spy1567</name>
</gene>
<keyword id="KW-0687">Ribonucleoprotein</keyword>
<keyword id="KW-0689">Ribosomal protein</keyword>
<keyword id="KW-0694">RNA-binding</keyword>
<keyword id="KW-0699">rRNA-binding</keyword>
<protein>
    <recommendedName>
        <fullName evidence="1">Small ribosomal subunit protein bS6</fullName>
    </recommendedName>
    <alternativeName>
        <fullName evidence="2">30S ribosomal protein S6</fullName>
    </alternativeName>
</protein>
<accession>Q5XA61</accession>
<evidence type="ECO:0000255" key="1">
    <source>
        <dbReference type="HAMAP-Rule" id="MF_00360"/>
    </source>
</evidence>
<evidence type="ECO:0000305" key="2"/>
<dbReference type="EMBL" id="CP000003">
    <property type="protein sequence ID" value="AAT87702.1"/>
    <property type="molecule type" value="Genomic_DNA"/>
</dbReference>
<dbReference type="RefSeq" id="WP_002983117.1">
    <property type="nucleotide sequence ID" value="NC_006086.1"/>
</dbReference>
<dbReference type="SMR" id="Q5XA61"/>
<dbReference type="GeneID" id="83689976"/>
<dbReference type="KEGG" id="spa:M6_Spy1567"/>
<dbReference type="HOGENOM" id="CLU_113441_5_3_9"/>
<dbReference type="Proteomes" id="UP000001167">
    <property type="component" value="Chromosome"/>
</dbReference>
<dbReference type="GO" id="GO:0005737">
    <property type="term" value="C:cytoplasm"/>
    <property type="evidence" value="ECO:0007669"/>
    <property type="project" value="UniProtKB-ARBA"/>
</dbReference>
<dbReference type="GO" id="GO:1990904">
    <property type="term" value="C:ribonucleoprotein complex"/>
    <property type="evidence" value="ECO:0007669"/>
    <property type="project" value="UniProtKB-KW"/>
</dbReference>
<dbReference type="GO" id="GO:0005840">
    <property type="term" value="C:ribosome"/>
    <property type="evidence" value="ECO:0007669"/>
    <property type="project" value="UniProtKB-KW"/>
</dbReference>
<dbReference type="GO" id="GO:0070181">
    <property type="term" value="F:small ribosomal subunit rRNA binding"/>
    <property type="evidence" value="ECO:0007669"/>
    <property type="project" value="TreeGrafter"/>
</dbReference>
<dbReference type="GO" id="GO:0003735">
    <property type="term" value="F:structural constituent of ribosome"/>
    <property type="evidence" value="ECO:0007669"/>
    <property type="project" value="InterPro"/>
</dbReference>
<dbReference type="GO" id="GO:0006412">
    <property type="term" value="P:translation"/>
    <property type="evidence" value="ECO:0007669"/>
    <property type="project" value="UniProtKB-UniRule"/>
</dbReference>
<dbReference type="CDD" id="cd00473">
    <property type="entry name" value="bS6"/>
    <property type="match status" value="1"/>
</dbReference>
<dbReference type="FunFam" id="3.30.70.60:FF:000002">
    <property type="entry name" value="30S ribosomal protein S6"/>
    <property type="match status" value="1"/>
</dbReference>
<dbReference type="Gene3D" id="3.30.70.60">
    <property type="match status" value="1"/>
</dbReference>
<dbReference type="HAMAP" id="MF_00360">
    <property type="entry name" value="Ribosomal_bS6"/>
    <property type="match status" value="1"/>
</dbReference>
<dbReference type="InterPro" id="IPR000529">
    <property type="entry name" value="Ribosomal_bS6"/>
</dbReference>
<dbReference type="InterPro" id="IPR035980">
    <property type="entry name" value="Ribosomal_bS6_sf"/>
</dbReference>
<dbReference type="InterPro" id="IPR020814">
    <property type="entry name" value="Ribosomal_S6_plastid/chlpt"/>
</dbReference>
<dbReference type="InterPro" id="IPR014717">
    <property type="entry name" value="Transl_elong_EF1B/ribsomal_bS6"/>
</dbReference>
<dbReference type="NCBIfam" id="TIGR00166">
    <property type="entry name" value="S6"/>
    <property type="match status" value="1"/>
</dbReference>
<dbReference type="PANTHER" id="PTHR21011">
    <property type="entry name" value="MITOCHONDRIAL 28S RIBOSOMAL PROTEIN S6"/>
    <property type="match status" value="1"/>
</dbReference>
<dbReference type="PANTHER" id="PTHR21011:SF1">
    <property type="entry name" value="SMALL RIBOSOMAL SUBUNIT PROTEIN BS6M"/>
    <property type="match status" value="1"/>
</dbReference>
<dbReference type="Pfam" id="PF01250">
    <property type="entry name" value="Ribosomal_S6"/>
    <property type="match status" value="1"/>
</dbReference>
<dbReference type="SUPFAM" id="SSF54995">
    <property type="entry name" value="Ribosomal protein S6"/>
    <property type="match status" value="1"/>
</dbReference>
<reference key="1">
    <citation type="journal article" date="2004" name="J. Infect. Dis.">
        <title>Progress toward characterization of the group A Streptococcus metagenome: complete genome sequence of a macrolide-resistant serotype M6 strain.</title>
        <authorList>
            <person name="Banks D.J."/>
            <person name="Porcella S.F."/>
            <person name="Barbian K.D."/>
            <person name="Beres S.B."/>
            <person name="Philips L.E."/>
            <person name="Voyich J.M."/>
            <person name="DeLeo F.R."/>
            <person name="Martin J.M."/>
            <person name="Somerville G.A."/>
            <person name="Musser J.M."/>
        </authorList>
    </citation>
    <scope>NUCLEOTIDE SEQUENCE [LARGE SCALE GENOMIC DNA]</scope>
    <source>
        <strain>ATCC BAA-946 / MGAS10394</strain>
    </source>
</reference>
<comment type="function">
    <text evidence="1">Binds together with bS18 to 16S ribosomal RNA.</text>
</comment>
<comment type="similarity">
    <text evidence="1">Belongs to the bacterial ribosomal protein bS6 family.</text>
</comment>
<proteinExistence type="inferred from homology"/>
<name>RS6_STRP6</name>
<sequence>MAKYEILYIIRPNIEEEAKNALVARFDSILTDNGATVVESKDWEKRRLAYEINDFREGLYHIVNLEATDAAALNEFDRLSKINGDILRHMIVKLDA</sequence>
<feature type="chain" id="PRO_0000176852" description="Small ribosomal subunit protein bS6">
    <location>
        <begin position="1"/>
        <end position="96"/>
    </location>
</feature>